<keyword id="KW-0001">2Fe-2S</keyword>
<keyword id="KW-0004">4Fe-4S</keyword>
<keyword id="KW-0093">Biotin biosynthesis</keyword>
<keyword id="KW-0408">Iron</keyword>
<keyword id="KW-0411">Iron-sulfur</keyword>
<keyword id="KW-0479">Metal-binding</keyword>
<keyword id="KW-0949">S-adenosyl-L-methionine</keyword>
<keyword id="KW-0808">Transferase</keyword>
<evidence type="ECO:0000255" key="1">
    <source>
        <dbReference type="HAMAP-Rule" id="MF_01694"/>
    </source>
</evidence>
<evidence type="ECO:0000255" key="2">
    <source>
        <dbReference type="PROSITE-ProRule" id="PRU01266"/>
    </source>
</evidence>
<name>BIOB_VIBA3</name>
<reference key="1">
    <citation type="submission" date="2009-02" db="EMBL/GenBank/DDBJ databases">
        <title>Vibrio splendidus str. LGP32 complete genome.</title>
        <authorList>
            <person name="Mazel D."/>
            <person name="Le Roux F."/>
        </authorList>
    </citation>
    <scope>NUCLEOTIDE SEQUENCE [LARGE SCALE GENOMIC DNA]</scope>
    <source>
        <strain>LGP32</strain>
    </source>
</reference>
<organism>
    <name type="scientific">Vibrio atlanticus (strain LGP32)</name>
    <name type="common">Vibrio splendidus (strain Mel32)</name>
    <dbReference type="NCBI Taxonomy" id="575788"/>
    <lineage>
        <taxon>Bacteria</taxon>
        <taxon>Pseudomonadati</taxon>
        <taxon>Pseudomonadota</taxon>
        <taxon>Gammaproteobacteria</taxon>
        <taxon>Vibrionales</taxon>
        <taxon>Vibrionaceae</taxon>
        <taxon>Vibrio</taxon>
    </lineage>
</organism>
<sequence length="350" mass="39210">MEVRHDWTVAEVRALLEKPFMDLMFEAQVVHRQYQEHNHVQVSTLLSIKTGACPEDCKYCPQSAHYRTDVDKERLMEVERVLDAAQKAKNAGSTRFCMGAAWKNPKERDMPHLTDMIKGVKGMGLETCMTLGMLTPDQAGELADAGLDYYNHNLDTSPEFYGSIITTRTYQDRLDTLSHVRDAGMKICSGGIIGMGESTNDRAGLLVELANLPVHPESVPINMLVKVKGTPMENVDDVESFDFVKLIAIARIMMPMSAVRLSAGRENMNEQMQAMCFMAGANSIFYGCKLLTTPNPDEDTDMQLFKKLGINSQQVAQKPDEIQENELLDQVVERVAARPTKDDMFYDATV</sequence>
<comment type="function">
    <text evidence="1">Catalyzes the conversion of dethiobiotin (DTB) to biotin by the insertion of a sulfur atom into dethiobiotin via a radical-based mechanism.</text>
</comment>
<comment type="catalytic activity">
    <reaction evidence="1">
        <text>(4R,5S)-dethiobiotin + (sulfur carrier)-SH + 2 reduced [2Fe-2S]-[ferredoxin] + 2 S-adenosyl-L-methionine = (sulfur carrier)-H + biotin + 2 5'-deoxyadenosine + 2 L-methionine + 2 oxidized [2Fe-2S]-[ferredoxin]</text>
        <dbReference type="Rhea" id="RHEA:22060"/>
        <dbReference type="Rhea" id="RHEA-COMP:10000"/>
        <dbReference type="Rhea" id="RHEA-COMP:10001"/>
        <dbReference type="Rhea" id="RHEA-COMP:14737"/>
        <dbReference type="Rhea" id="RHEA-COMP:14739"/>
        <dbReference type="ChEBI" id="CHEBI:17319"/>
        <dbReference type="ChEBI" id="CHEBI:29917"/>
        <dbReference type="ChEBI" id="CHEBI:33737"/>
        <dbReference type="ChEBI" id="CHEBI:33738"/>
        <dbReference type="ChEBI" id="CHEBI:57586"/>
        <dbReference type="ChEBI" id="CHEBI:57844"/>
        <dbReference type="ChEBI" id="CHEBI:59789"/>
        <dbReference type="ChEBI" id="CHEBI:64428"/>
        <dbReference type="ChEBI" id="CHEBI:149473"/>
        <dbReference type="EC" id="2.8.1.6"/>
    </reaction>
</comment>
<comment type="cofactor">
    <cofactor evidence="1">
        <name>[4Fe-4S] cluster</name>
        <dbReference type="ChEBI" id="CHEBI:49883"/>
    </cofactor>
    <text evidence="1">Binds 1 [4Fe-4S] cluster. The cluster is coordinated with 3 cysteines and an exchangeable S-adenosyl-L-methionine.</text>
</comment>
<comment type="cofactor">
    <cofactor evidence="1">
        <name>[2Fe-2S] cluster</name>
        <dbReference type="ChEBI" id="CHEBI:190135"/>
    </cofactor>
    <text evidence="1">Binds 1 [2Fe-2S] cluster. The cluster is coordinated with 3 cysteines and 1 arginine.</text>
</comment>
<comment type="pathway">
    <text evidence="1">Cofactor biosynthesis; biotin biosynthesis; biotin from 7,8-diaminononanoate: step 2/2.</text>
</comment>
<comment type="subunit">
    <text evidence="1">Homodimer.</text>
</comment>
<comment type="similarity">
    <text evidence="1">Belongs to the radical SAM superfamily. Biotin synthase family.</text>
</comment>
<accession>B7VH16</accession>
<dbReference type="EC" id="2.8.1.6" evidence="1"/>
<dbReference type="EMBL" id="FM954972">
    <property type="protein sequence ID" value="CAV19216.1"/>
    <property type="molecule type" value="Genomic_DNA"/>
</dbReference>
<dbReference type="SMR" id="B7VH16"/>
<dbReference type="STRING" id="575788.VS_2040"/>
<dbReference type="KEGG" id="vsp:VS_2040"/>
<dbReference type="eggNOG" id="COG0502">
    <property type="taxonomic scope" value="Bacteria"/>
</dbReference>
<dbReference type="HOGENOM" id="CLU_033172_1_2_6"/>
<dbReference type="UniPathway" id="UPA00078">
    <property type="reaction ID" value="UER00162"/>
</dbReference>
<dbReference type="Proteomes" id="UP000009100">
    <property type="component" value="Chromosome 1"/>
</dbReference>
<dbReference type="GO" id="GO:0051537">
    <property type="term" value="F:2 iron, 2 sulfur cluster binding"/>
    <property type="evidence" value="ECO:0007669"/>
    <property type="project" value="UniProtKB-KW"/>
</dbReference>
<dbReference type="GO" id="GO:0051539">
    <property type="term" value="F:4 iron, 4 sulfur cluster binding"/>
    <property type="evidence" value="ECO:0007669"/>
    <property type="project" value="UniProtKB-KW"/>
</dbReference>
<dbReference type="GO" id="GO:0004076">
    <property type="term" value="F:biotin synthase activity"/>
    <property type="evidence" value="ECO:0007669"/>
    <property type="project" value="UniProtKB-UniRule"/>
</dbReference>
<dbReference type="GO" id="GO:0005506">
    <property type="term" value="F:iron ion binding"/>
    <property type="evidence" value="ECO:0007669"/>
    <property type="project" value="UniProtKB-UniRule"/>
</dbReference>
<dbReference type="GO" id="GO:0009102">
    <property type="term" value="P:biotin biosynthetic process"/>
    <property type="evidence" value="ECO:0007669"/>
    <property type="project" value="UniProtKB-UniRule"/>
</dbReference>
<dbReference type="CDD" id="cd01335">
    <property type="entry name" value="Radical_SAM"/>
    <property type="match status" value="1"/>
</dbReference>
<dbReference type="FunFam" id="3.20.20.70:FF:000011">
    <property type="entry name" value="Biotin synthase"/>
    <property type="match status" value="1"/>
</dbReference>
<dbReference type="Gene3D" id="3.20.20.70">
    <property type="entry name" value="Aldolase class I"/>
    <property type="match status" value="1"/>
</dbReference>
<dbReference type="HAMAP" id="MF_01694">
    <property type="entry name" value="BioB"/>
    <property type="match status" value="1"/>
</dbReference>
<dbReference type="InterPro" id="IPR013785">
    <property type="entry name" value="Aldolase_TIM"/>
</dbReference>
<dbReference type="InterPro" id="IPR010722">
    <property type="entry name" value="BATS_dom"/>
</dbReference>
<dbReference type="InterPro" id="IPR002684">
    <property type="entry name" value="Biotin_synth/BioAB"/>
</dbReference>
<dbReference type="InterPro" id="IPR024177">
    <property type="entry name" value="Biotin_synthase"/>
</dbReference>
<dbReference type="InterPro" id="IPR006638">
    <property type="entry name" value="Elp3/MiaA/NifB-like_rSAM"/>
</dbReference>
<dbReference type="InterPro" id="IPR007197">
    <property type="entry name" value="rSAM"/>
</dbReference>
<dbReference type="NCBIfam" id="TIGR00433">
    <property type="entry name" value="bioB"/>
    <property type="match status" value="1"/>
</dbReference>
<dbReference type="PANTHER" id="PTHR22976">
    <property type="entry name" value="BIOTIN SYNTHASE"/>
    <property type="match status" value="1"/>
</dbReference>
<dbReference type="PANTHER" id="PTHR22976:SF2">
    <property type="entry name" value="BIOTIN SYNTHASE, MITOCHONDRIAL"/>
    <property type="match status" value="1"/>
</dbReference>
<dbReference type="Pfam" id="PF06968">
    <property type="entry name" value="BATS"/>
    <property type="match status" value="1"/>
</dbReference>
<dbReference type="Pfam" id="PF04055">
    <property type="entry name" value="Radical_SAM"/>
    <property type="match status" value="1"/>
</dbReference>
<dbReference type="PIRSF" id="PIRSF001619">
    <property type="entry name" value="Biotin_synth"/>
    <property type="match status" value="1"/>
</dbReference>
<dbReference type="SFLD" id="SFLDG01060">
    <property type="entry name" value="BATS_domain_containing"/>
    <property type="match status" value="1"/>
</dbReference>
<dbReference type="SFLD" id="SFLDF00272">
    <property type="entry name" value="biotin_synthase"/>
    <property type="match status" value="1"/>
</dbReference>
<dbReference type="SMART" id="SM00876">
    <property type="entry name" value="BATS"/>
    <property type="match status" value="1"/>
</dbReference>
<dbReference type="SMART" id="SM00729">
    <property type="entry name" value="Elp3"/>
    <property type="match status" value="1"/>
</dbReference>
<dbReference type="SUPFAM" id="SSF102114">
    <property type="entry name" value="Radical SAM enzymes"/>
    <property type="match status" value="1"/>
</dbReference>
<dbReference type="PROSITE" id="PS51918">
    <property type="entry name" value="RADICAL_SAM"/>
    <property type="match status" value="1"/>
</dbReference>
<feature type="chain" id="PRO_0000381701" description="Biotin synthase">
    <location>
        <begin position="1"/>
        <end position="350"/>
    </location>
</feature>
<feature type="domain" description="Radical SAM core" evidence="2">
    <location>
        <begin position="38"/>
        <end position="265"/>
    </location>
</feature>
<feature type="binding site" evidence="1">
    <location>
        <position position="53"/>
    </location>
    <ligand>
        <name>[4Fe-4S] cluster</name>
        <dbReference type="ChEBI" id="CHEBI:49883"/>
        <note>4Fe-4S-S-AdoMet</note>
    </ligand>
</feature>
<feature type="binding site" evidence="1">
    <location>
        <position position="57"/>
    </location>
    <ligand>
        <name>[4Fe-4S] cluster</name>
        <dbReference type="ChEBI" id="CHEBI:49883"/>
        <note>4Fe-4S-S-AdoMet</note>
    </ligand>
</feature>
<feature type="binding site" evidence="1">
    <location>
        <position position="60"/>
    </location>
    <ligand>
        <name>[4Fe-4S] cluster</name>
        <dbReference type="ChEBI" id="CHEBI:49883"/>
        <note>4Fe-4S-S-AdoMet</note>
    </ligand>
</feature>
<feature type="binding site" evidence="1">
    <location>
        <position position="97"/>
    </location>
    <ligand>
        <name>[2Fe-2S] cluster</name>
        <dbReference type="ChEBI" id="CHEBI:190135"/>
    </ligand>
</feature>
<feature type="binding site" evidence="1">
    <location>
        <position position="128"/>
    </location>
    <ligand>
        <name>[2Fe-2S] cluster</name>
        <dbReference type="ChEBI" id="CHEBI:190135"/>
    </ligand>
</feature>
<feature type="binding site" evidence="1">
    <location>
        <position position="188"/>
    </location>
    <ligand>
        <name>[2Fe-2S] cluster</name>
        <dbReference type="ChEBI" id="CHEBI:190135"/>
    </ligand>
</feature>
<feature type="binding site" evidence="1">
    <location>
        <position position="260"/>
    </location>
    <ligand>
        <name>[2Fe-2S] cluster</name>
        <dbReference type="ChEBI" id="CHEBI:190135"/>
    </ligand>
</feature>
<protein>
    <recommendedName>
        <fullName evidence="1">Biotin synthase</fullName>
        <ecNumber evidence="1">2.8.1.6</ecNumber>
    </recommendedName>
</protein>
<gene>
    <name evidence="1" type="primary">bioB</name>
    <name type="ordered locus">VS_2040</name>
</gene>
<proteinExistence type="inferred from homology"/>